<gene>
    <name evidence="1" type="primary">rpmC</name>
    <name type="ordered locus">LSEI_2495</name>
</gene>
<dbReference type="EMBL" id="CP000423">
    <property type="protein sequence ID" value="ABJ71231.1"/>
    <property type="molecule type" value="Genomic_DNA"/>
</dbReference>
<dbReference type="RefSeq" id="WP_003567550.1">
    <property type="nucleotide sequence ID" value="NC_008526.1"/>
</dbReference>
<dbReference type="RefSeq" id="YP_807673.1">
    <property type="nucleotide sequence ID" value="NC_008526.1"/>
</dbReference>
<dbReference type="SMR" id="Q034Z1"/>
<dbReference type="STRING" id="321967.LSEI_2495"/>
<dbReference type="PaxDb" id="321967-LSEI_2495"/>
<dbReference type="GeneID" id="57091074"/>
<dbReference type="KEGG" id="lca:LSEI_2495"/>
<dbReference type="PATRIC" id="fig|321967.11.peg.2449"/>
<dbReference type="HOGENOM" id="CLU_158491_5_2_9"/>
<dbReference type="Proteomes" id="UP000001651">
    <property type="component" value="Chromosome"/>
</dbReference>
<dbReference type="GO" id="GO:0022625">
    <property type="term" value="C:cytosolic large ribosomal subunit"/>
    <property type="evidence" value="ECO:0007669"/>
    <property type="project" value="TreeGrafter"/>
</dbReference>
<dbReference type="GO" id="GO:0003735">
    <property type="term" value="F:structural constituent of ribosome"/>
    <property type="evidence" value="ECO:0007669"/>
    <property type="project" value="InterPro"/>
</dbReference>
<dbReference type="GO" id="GO:0006412">
    <property type="term" value="P:translation"/>
    <property type="evidence" value="ECO:0007669"/>
    <property type="project" value="UniProtKB-UniRule"/>
</dbReference>
<dbReference type="CDD" id="cd00427">
    <property type="entry name" value="Ribosomal_L29_HIP"/>
    <property type="match status" value="1"/>
</dbReference>
<dbReference type="FunFam" id="1.10.287.310:FF:000001">
    <property type="entry name" value="50S ribosomal protein L29"/>
    <property type="match status" value="1"/>
</dbReference>
<dbReference type="Gene3D" id="1.10.287.310">
    <property type="match status" value="1"/>
</dbReference>
<dbReference type="HAMAP" id="MF_00374">
    <property type="entry name" value="Ribosomal_uL29"/>
    <property type="match status" value="1"/>
</dbReference>
<dbReference type="InterPro" id="IPR050063">
    <property type="entry name" value="Ribosomal_protein_uL29"/>
</dbReference>
<dbReference type="InterPro" id="IPR001854">
    <property type="entry name" value="Ribosomal_uL29"/>
</dbReference>
<dbReference type="InterPro" id="IPR018254">
    <property type="entry name" value="Ribosomal_uL29_CS"/>
</dbReference>
<dbReference type="InterPro" id="IPR036049">
    <property type="entry name" value="Ribosomal_uL29_sf"/>
</dbReference>
<dbReference type="NCBIfam" id="TIGR00012">
    <property type="entry name" value="L29"/>
    <property type="match status" value="1"/>
</dbReference>
<dbReference type="PANTHER" id="PTHR10916">
    <property type="entry name" value="60S RIBOSOMAL PROTEIN L35/50S RIBOSOMAL PROTEIN L29"/>
    <property type="match status" value="1"/>
</dbReference>
<dbReference type="PANTHER" id="PTHR10916:SF0">
    <property type="entry name" value="LARGE RIBOSOMAL SUBUNIT PROTEIN UL29C"/>
    <property type="match status" value="1"/>
</dbReference>
<dbReference type="Pfam" id="PF00831">
    <property type="entry name" value="Ribosomal_L29"/>
    <property type="match status" value="1"/>
</dbReference>
<dbReference type="SUPFAM" id="SSF46561">
    <property type="entry name" value="Ribosomal protein L29 (L29p)"/>
    <property type="match status" value="1"/>
</dbReference>
<dbReference type="PROSITE" id="PS00579">
    <property type="entry name" value="RIBOSOMAL_L29"/>
    <property type="match status" value="1"/>
</dbReference>
<comment type="similarity">
    <text evidence="1">Belongs to the universal ribosomal protein uL29 family.</text>
</comment>
<accession>Q034Z1</accession>
<feature type="chain" id="PRO_1000007504" description="Large ribosomal subunit protein uL29">
    <location>
        <begin position="1"/>
        <end position="64"/>
    </location>
</feature>
<protein>
    <recommendedName>
        <fullName evidence="1">Large ribosomal subunit protein uL29</fullName>
    </recommendedName>
    <alternativeName>
        <fullName evidence="2">50S ribosomal protein L29</fullName>
    </alternativeName>
</protein>
<keyword id="KW-1185">Reference proteome</keyword>
<keyword id="KW-0687">Ribonucleoprotein</keyword>
<keyword id="KW-0689">Ribosomal protein</keyword>
<name>RL29_LACP3</name>
<evidence type="ECO:0000255" key="1">
    <source>
        <dbReference type="HAMAP-Rule" id="MF_00374"/>
    </source>
</evidence>
<evidence type="ECO:0000305" key="2"/>
<sequence length="64" mass="7479">MKAKEITALTTAEMLDKEKQYKEELFNLRFQQATGQLENTARLSQVRKNIARIKTVLRQQALNK</sequence>
<reference key="1">
    <citation type="journal article" date="2006" name="Proc. Natl. Acad. Sci. U.S.A.">
        <title>Comparative genomics of the lactic acid bacteria.</title>
        <authorList>
            <person name="Makarova K.S."/>
            <person name="Slesarev A."/>
            <person name="Wolf Y.I."/>
            <person name="Sorokin A."/>
            <person name="Mirkin B."/>
            <person name="Koonin E.V."/>
            <person name="Pavlov A."/>
            <person name="Pavlova N."/>
            <person name="Karamychev V."/>
            <person name="Polouchine N."/>
            <person name="Shakhova V."/>
            <person name="Grigoriev I."/>
            <person name="Lou Y."/>
            <person name="Rohksar D."/>
            <person name="Lucas S."/>
            <person name="Huang K."/>
            <person name="Goodstein D.M."/>
            <person name="Hawkins T."/>
            <person name="Plengvidhya V."/>
            <person name="Welker D."/>
            <person name="Hughes J."/>
            <person name="Goh Y."/>
            <person name="Benson A."/>
            <person name="Baldwin K."/>
            <person name="Lee J.-H."/>
            <person name="Diaz-Muniz I."/>
            <person name="Dosti B."/>
            <person name="Smeianov V."/>
            <person name="Wechter W."/>
            <person name="Barabote R."/>
            <person name="Lorca G."/>
            <person name="Altermann E."/>
            <person name="Barrangou R."/>
            <person name="Ganesan B."/>
            <person name="Xie Y."/>
            <person name="Rawsthorne H."/>
            <person name="Tamir D."/>
            <person name="Parker C."/>
            <person name="Breidt F."/>
            <person name="Broadbent J.R."/>
            <person name="Hutkins R."/>
            <person name="O'Sullivan D."/>
            <person name="Steele J."/>
            <person name="Unlu G."/>
            <person name="Saier M.H. Jr."/>
            <person name="Klaenhammer T."/>
            <person name="Richardson P."/>
            <person name="Kozyavkin S."/>
            <person name="Weimer B.C."/>
            <person name="Mills D.A."/>
        </authorList>
    </citation>
    <scope>NUCLEOTIDE SEQUENCE [LARGE SCALE GENOMIC DNA]</scope>
    <source>
        <strain>ATCC 334 / BCRC 17002 / CCUG 31169 / CIP 107868 / KCTC 3260 / NRRL B-441</strain>
    </source>
</reference>
<organism>
    <name type="scientific">Lacticaseibacillus paracasei (strain ATCC 334 / BCRC 17002 / CCUG 31169 / CIP 107868 / KCTC 3260 / NRRL B-441)</name>
    <name type="common">Lactobacillus paracasei</name>
    <dbReference type="NCBI Taxonomy" id="321967"/>
    <lineage>
        <taxon>Bacteria</taxon>
        <taxon>Bacillati</taxon>
        <taxon>Bacillota</taxon>
        <taxon>Bacilli</taxon>
        <taxon>Lactobacillales</taxon>
        <taxon>Lactobacillaceae</taxon>
        <taxon>Lacticaseibacillus</taxon>
    </lineage>
</organism>
<proteinExistence type="inferred from homology"/>